<accession>Q4ZJZ1</accession>
<dbReference type="EMBL" id="DQ000240">
    <property type="protein sequence ID" value="AAY24527.1"/>
    <property type="molecule type" value="Genomic_DNA"/>
</dbReference>
<dbReference type="KEGG" id="vg:3416070"/>
<dbReference type="Proteomes" id="UP000008168">
    <property type="component" value="Genome"/>
</dbReference>
<dbReference type="GO" id="GO:0052170">
    <property type="term" value="P:symbiont-mediated suppression of host innate immune response"/>
    <property type="evidence" value="ECO:0007669"/>
    <property type="project" value="UniProtKB-KW"/>
</dbReference>
<dbReference type="CDD" id="cd19941">
    <property type="entry name" value="TIL"/>
    <property type="match status" value="1"/>
</dbReference>
<dbReference type="Gene3D" id="2.10.25.10">
    <property type="entry name" value="Laminin"/>
    <property type="match status" value="1"/>
</dbReference>
<dbReference type="InterPro" id="IPR036084">
    <property type="entry name" value="Ser_inhib-like_sf"/>
</dbReference>
<dbReference type="InterPro" id="IPR002919">
    <property type="entry name" value="TIL_dom"/>
</dbReference>
<dbReference type="Pfam" id="PF01826">
    <property type="entry name" value="TIL"/>
    <property type="match status" value="1"/>
</dbReference>
<dbReference type="SUPFAM" id="SSF57567">
    <property type="entry name" value="Serine protease inhibitors"/>
    <property type="match status" value="1"/>
</dbReference>
<comment type="function">
    <text evidence="1">Counteracts the host humoral immune response by inhibiting the processing and the amidolytic activity of host PAP1 and PAP3. Thereby, melanization of host hemolymph, normally producing several reactive intermediates toxic for viruses, is deregulated and proper immune response cannot occur (By similarity).</text>
</comment>
<comment type="subunit">
    <text evidence="1">Interacts with host PAP1, PAP3 and SPH2.</text>
</comment>
<comment type="similarity">
    <text evidence="3">Belongs to the polydnaviridae EGF-like motif protein family.</text>
</comment>
<sequence length="346" mass="39663">MYIDTGIMSNNIFLFAFFALVGLTRIEAMPTKGSEGTWNVDYEDQEHTGITCRENEHYNSTRIECEDECNDRNNKLCYRFQQFCWCNEGYIRNSSHICVKLEDCLKDEEQKSETLASSANNDSSKRLEDDLKLFSHDSVSHTSLEPETQAQKFNGIIDQETLDLVFGKPENSSADNKPLETKTQAQKFNGIINEETLDLVFGKPENSWAENKPLETKTQAQKFNGIINEETLDLVFGKPENSWAENKPLETETQAQKFNGIINEETLDLVFGKPENSWAENKPLETKTQAQKFNGIINEETLDLVFGKPENSWAENKPLETKTQTQKFNGIIDQYTRRIVFVFSNI</sequence>
<organismHost>
    <name type="scientific">Microplitis demolitor</name>
    <name type="common">Parasitoid wasp</name>
    <dbReference type="NCBI Taxonomy" id="69319"/>
</organismHost>
<gene>
    <name type="primary">O5</name>
</gene>
<evidence type="ECO:0000250" key="1"/>
<evidence type="ECO:0000255" key="2"/>
<evidence type="ECO:0000305" key="3"/>
<reference key="1">
    <citation type="journal article" date="2006" name="Virology">
        <title>Polydnavirus genomes reflect their dual roles as mutualists and pathogens.</title>
        <authorList>
            <person name="Webb B.A."/>
            <person name="Strand M.R."/>
            <person name="Dickey S.E."/>
            <person name="Beck M.H."/>
            <person name="Hilgarth R.S."/>
            <person name="Barney W.E."/>
            <person name="Kadash K."/>
            <person name="Kroemer J.A."/>
            <person name="Lindstrom K.G."/>
            <person name="Rattanadechakul W."/>
            <person name="Shelby K.S."/>
            <person name="Thoetkiattikul H."/>
            <person name="Turnbull M.W."/>
            <person name="Witherell R.A."/>
        </authorList>
    </citation>
    <scope>NUCLEOTIDE SEQUENCE [GENOMIC DNA]</scope>
</reference>
<name>EG15B_MDBVW</name>
<proteinExistence type="inferred from homology"/>
<organism>
    <name type="scientific">Microplitis demolitor bracovirus (isolate Webb)</name>
    <name type="common">MdBV</name>
    <dbReference type="NCBI Taxonomy" id="654919"/>
    <lineage>
        <taxon>Viruses</taxon>
        <taxon>Viruses incertae sedis</taxon>
        <taxon>Polydnaviriformidae</taxon>
        <taxon>Bracoviriform</taxon>
        <taxon>Microplitis demolitor bracovirus</taxon>
    </lineage>
</organism>
<keyword id="KW-0945">Host-virus interaction</keyword>
<keyword id="KW-1090">Inhibition of host innate immune response by virus</keyword>
<keyword id="KW-1185">Reference proteome</keyword>
<keyword id="KW-0732">Signal</keyword>
<keyword id="KW-0899">Viral immunoevasion</keyword>
<feature type="signal peptide" evidence="2">
    <location>
        <begin position="1"/>
        <end position="28"/>
    </location>
</feature>
<feature type="chain" id="PRO_0000405390" description="Protease inhibitor Egf1.5b">
    <location>
        <begin position="29"/>
        <end position="346"/>
    </location>
</feature>
<feature type="domain" description="TIL">
    <location>
        <begin position="52"/>
        <end position="104"/>
    </location>
</feature>
<protein>
    <recommendedName>
        <fullName>Protease inhibitor Egf1.5b</fullName>
    </recommendedName>
</protein>